<reference key="1">
    <citation type="journal article" date="2009" name="J. Bacteriol.">
        <title>Complete genome sequence of Rhodobacter sphaeroides KD131.</title>
        <authorList>
            <person name="Lim S.-K."/>
            <person name="Kim S.J."/>
            <person name="Cha S.H."/>
            <person name="Oh Y.-K."/>
            <person name="Rhee H.-J."/>
            <person name="Kim M.-S."/>
            <person name="Lee J.K."/>
        </authorList>
    </citation>
    <scope>NUCLEOTIDE SEQUENCE [LARGE SCALE GENOMIC DNA]</scope>
    <source>
        <strain>KD131 / KCTC 12085</strain>
    </source>
</reference>
<dbReference type="EMBL" id="CP001150">
    <property type="protein sequence ID" value="ACL99937.1"/>
    <property type="molecule type" value="Genomic_DNA"/>
</dbReference>
<dbReference type="RefSeq" id="WP_002722610.1">
    <property type="nucleotide sequence ID" value="NC_011963.1"/>
</dbReference>
<dbReference type="SMR" id="B9KLF5"/>
<dbReference type="GeneID" id="67445564"/>
<dbReference type="KEGG" id="rsk:RSKD131_0078"/>
<dbReference type="HOGENOM" id="CLU_101379_2_0_5"/>
<dbReference type="GO" id="GO:0003677">
    <property type="term" value="F:DNA binding"/>
    <property type="evidence" value="ECO:0007669"/>
    <property type="project" value="UniProtKB-UniRule"/>
</dbReference>
<dbReference type="GO" id="GO:0070063">
    <property type="term" value="F:RNA polymerase binding"/>
    <property type="evidence" value="ECO:0007669"/>
    <property type="project" value="InterPro"/>
</dbReference>
<dbReference type="GO" id="GO:0006354">
    <property type="term" value="P:DNA-templated transcription elongation"/>
    <property type="evidence" value="ECO:0007669"/>
    <property type="project" value="TreeGrafter"/>
</dbReference>
<dbReference type="GO" id="GO:0032784">
    <property type="term" value="P:regulation of DNA-templated transcription elongation"/>
    <property type="evidence" value="ECO:0007669"/>
    <property type="project" value="UniProtKB-UniRule"/>
</dbReference>
<dbReference type="FunFam" id="1.10.287.180:FF:000001">
    <property type="entry name" value="Transcription elongation factor GreA"/>
    <property type="match status" value="1"/>
</dbReference>
<dbReference type="FunFam" id="3.10.50.30:FF:000001">
    <property type="entry name" value="Transcription elongation factor GreA"/>
    <property type="match status" value="1"/>
</dbReference>
<dbReference type="Gene3D" id="3.10.50.30">
    <property type="entry name" value="Transcription elongation factor, GreA/GreB, C-terminal domain"/>
    <property type="match status" value="1"/>
</dbReference>
<dbReference type="Gene3D" id="1.10.287.180">
    <property type="entry name" value="Transcription elongation factor, GreA/GreB, N-terminal domain"/>
    <property type="match status" value="1"/>
</dbReference>
<dbReference type="HAMAP" id="MF_00105">
    <property type="entry name" value="GreA_GreB"/>
    <property type="match status" value="1"/>
</dbReference>
<dbReference type="InterPro" id="IPR036953">
    <property type="entry name" value="GreA/GreB_C_sf"/>
</dbReference>
<dbReference type="InterPro" id="IPR018151">
    <property type="entry name" value="TF_GreA/GreB_CS"/>
</dbReference>
<dbReference type="InterPro" id="IPR006359">
    <property type="entry name" value="Tscrpt_elong_fac_GreA"/>
</dbReference>
<dbReference type="InterPro" id="IPR028624">
    <property type="entry name" value="Tscrpt_elong_fac_GreA/B"/>
</dbReference>
<dbReference type="InterPro" id="IPR001437">
    <property type="entry name" value="Tscrpt_elong_fac_GreA/B_C"/>
</dbReference>
<dbReference type="InterPro" id="IPR023459">
    <property type="entry name" value="Tscrpt_elong_fac_GreA/B_fam"/>
</dbReference>
<dbReference type="InterPro" id="IPR022691">
    <property type="entry name" value="Tscrpt_elong_fac_GreA/B_N"/>
</dbReference>
<dbReference type="InterPro" id="IPR036805">
    <property type="entry name" value="Tscrpt_elong_fac_GreA/B_N_sf"/>
</dbReference>
<dbReference type="NCBIfam" id="TIGR01462">
    <property type="entry name" value="greA"/>
    <property type="match status" value="1"/>
</dbReference>
<dbReference type="NCBIfam" id="NF001261">
    <property type="entry name" value="PRK00226.1-2"/>
    <property type="match status" value="1"/>
</dbReference>
<dbReference type="NCBIfam" id="NF001263">
    <property type="entry name" value="PRK00226.1-4"/>
    <property type="match status" value="1"/>
</dbReference>
<dbReference type="NCBIfam" id="NF001264">
    <property type="entry name" value="PRK00226.1-5"/>
    <property type="match status" value="1"/>
</dbReference>
<dbReference type="PANTHER" id="PTHR30437">
    <property type="entry name" value="TRANSCRIPTION ELONGATION FACTOR GREA"/>
    <property type="match status" value="1"/>
</dbReference>
<dbReference type="PANTHER" id="PTHR30437:SF4">
    <property type="entry name" value="TRANSCRIPTION ELONGATION FACTOR GREA"/>
    <property type="match status" value="1"/>
</dbReference>
<dbReference type="Pfam" id="PF01272">
    <property type="entry name" value="GreA_GreB"/>
    <property type="match status" value="1"/>
</dbReference>
<dbReference type="Pfam" id="PF03449">
    <property type="entry name" value="GreA_GreB_N"/>
    <property type="match status" value="1"/>
</dbReference>
<dbReference type="PIRSF" id="PIRSF006092">
    <property type="entry name" value="GreA_GreB"/>
    <property type="match status" value="1"/>
</dbReference>
<dbReference type="SUPFAM" id="SSF54534">
    <property type="entry name" value="FKBP-like"/>
    <property type="match status" value="1"/>
</dbReference>
<dbReference type="SUPFAM" id="SSF46557">
    <property type="entry name" value="GreA transcript cleavage protein, N-terminal domain"/>
    <property type="match status" value="1"/>
</dbReference>
<dbReference type="PROSITE" id="PS00829">
    <property type="entry name" value="GREAB_1"/>
    <property type="match status" value="1"/>
</dbReference>
<comment type="function">
    <text evidence="1">Necessary for efficient RNA polymerase transcription elongation past template-encoded arresting sites. The arresting sites in DNA have the property of trapping a certain fraction of elongating RNA polymerases that pass through, resulting in locked ternary complexes. Cleavage of the nascent transcript by cleavage factors such as GreA or GreB allows the resumption of elongation from the new 3'terminus. GreA releases sequences of 2 to 3 nucleotides.</text>
</comment>
<comment type="similarity">
    <text evidence="1">Belongs to the GreA/GreB family.</text>
</comment>
<name>GREA_CERSK</name>
<sequence>MDKIPMTRAGFTALDDELKTLKTVERPAVIRSIAEAREHGDLSENAEYHAAREKQSFIEGRIKELEAILSLAEVIDPAKLSGSIKFGATVTILDEETEEERTYQIVGEAEADIEAGLLNIKSPLARALIGKDEGDSIEVKTPGGERGYEVVSVRFV</sequence>
<gene>
    <name evidence="1" type="primary">greA</name>
    <name type="ordered locus">RSKD131_0078</name>
</gene>
<evidence type="ECO:0000255" key="1">
    <source>
        <dbReference type="HAMAP-Rule" id="MF_00105"/>
    </source>
</evidence>
<protein>
    <recommendedName>
        <fullName evidence="1">Transcription elongation factor GreA</fullName>
    </recommendedName>
    <alternativeName>
        <fullName evidence="1">Transcript cleavage factor GreA</fullName>
    </alternativeName>
</protein>
<keyword id="KW-0175">Coiled coil</keyword>
<keyword id="KW-0238">DNA-binding</keyword>
<keyword id="KW-0804">Transcription</keyword>
<keyword id="KW-0805">Transcription regulation</keyword>
<accession>B9KLF5</accession>
<feature type="chain" id="PRO_1000190223" description="Transcription elongation factor GreA">
    <location>
        <begin position="1"/>
        <end position="156"/>
    </location>
</feature>
<feature type="coiled-coil region" evidence="1">
    <location>
        <begin position="46"/>
        <end position="67"/>
    </location>
</feature>
<organism>
    <name type="scientific">Cereibacter sphaeroides (strain KD131 / KCTC 12085)</name>
    <name type="common">Rhodobacter sphaeroides</name>
    <dbReference type="NCBI Taxonomy" id="557760"/>
    <lineage>
        <taxon>Bacteria</taxon>
        <taxon>Pseudomonadati</taxon>
        <taxon>Pseudomonadota</taxon>
        <taxon>Alphaproteobacteria</taxon>
        <taxon>Rhodobacterales</taxon>
        <taxon>Paracoccaceae</taxon>
        <taxon>Cereibacter</taxon>
    </lineage>
</organism>
<proteinExistence type="inferred from homology"/>